<keyword id="KW-1185">Reference proteome</keyword>
<keyword id="KW-0687">Ribonucleoprotein</keyword>
<keyword id="KW-0689">Ribosomal protein</keyword>
<keyword id="KW-0694">RNA-binding</keyword>
<keyword id="KW-0699">rRNA-binding</keyword>
<reference key="1">
    <citation type="journal article" date="2008" name="Proc. Natl. Acad. Sci. U.S.A.">
        <title>Niche adaptation and genome expansion in the chlorophyll d-producing cyanobacterium Acaryochloris marina.</title>
        <authorList>
            <person name="Swingley W.D."/>
            <person name="Chen M."/>
            <person name="Cheung P.C."/>
            <person name="Conrad A.L."/>
            <person name="Dejesa L.C."/>
            <person name="Hao J."/>
            <person name="Honchak B.M."/>
            <person name="Karbach L.E."/>
            <person name="Kurdoglu A."/>
            <person name="Lahiri S."/>
            <person name="Mastrian S.D."/>
            <person name="Miyashita H."/>
            <person name="Page L."/>
            <person name="Ramakrishna P."/>
            <person name="Satoh S."/>
            <person name="Sattley W.M."/>
            <person name="Shimada Y."/>
            <person name="Taylor H.L."/>
            <person name="Tomo T."/>
            <person name="Tsuchiya T."/>
            <person name="Wang Z.T."/>
            <person name="Raymond J."/>
            <person name="Mimuro M."/>
            <person name="Blankenship R.E."/>
            <person name="Touchman J.W."/>
        </authorList>
    </citation>
    <scope>NUCLEOTIDE SEQUENCE [LARGE SCALE GENOMIC DNA]</scope>
    <source>
        <strain>MBIC 11017</strain>
    </source>
</reference>
<sequence length="92" mass="10362">MSRSLKKGPFVADHLLTKVENLNEKGEKQVIKTWSRASTIIPQMIGHTIAVHNGRQHVPVYVSEQMVGHKLGEFAPTRTFKSHSKGDKKARM</sequence>
<proteinExistence type="inferred from homology"/>
<comment type="function">
    <text evidence="1">Protein S19 forms a complex with S13 that binds strongly to the 16S ribosomal RNA.</text>
</comment>
<comment type="similarity">
    <text evidence="1">Belongs to the universal ribosomal protein uS19 family.</text>
</comment>
<accession>B0C1D7</accession>
<protein>
    <recommendedName>
        <fullName evidence="1">Small ribosomal subunit protein uS19</fullName>
    </recommendedName>
    <alternativeName>
        <fullName evidence="2">30S ribosomal protein S19</fullName>
    </alternativeName>
</protein>
<name>RS19_ACAM1</name>
<evidence type="ECO:0000255" key="1">
    <source>
        <dbReference type="HAMAP-Rule" id="MF_00531"/>
    </source>
</evidence>
<evidence type="ECO:0000305" key="2"/>
<dbReference type="EMBL" id="CP000828">
    <property type="protein sequence ID" value="ABW29672.1"/>
    <property type="molecule type" value="Genomic_DNA"/>
</dbReference>
<dbReference type="RefSeq" id="WP_010469318.1">
    <property type="nucleotide sequence ID" value="NC_009925.1"/>
</dbReference>
<dbReference type="SMR" id="B0C1D7"/>
<dbReference type="STRING" id="329726.AM1_4700"/>
<dbReference type="KEGG" id="amr:AM1_4700"/>
<dbReference type="eggNOG" id="COG0185">
    <property type="taxonomic scope" value="Bacteria"/>
</dbReference>
<dbReference type="HOGENOM" id="CLU_144911_0_1_3"/>
<dbReference type="OrthoDB" id="9797833at2"/>
<dbReference type="Proteomes" id="UP000000268">
    <property type="component" value="Chromosome"/>
</dbReference>
<dbReference type="GO" id="GO:0005737">
    <property type="term" value="C:cytoplasm"/>
    <property type="evidence" value="ECO:0007669"/>
    <property type="project" value="UniProtKB-ARBA"/>
</dbReference>
<dbReference type="GO" id="GO:0015935">
    <property type="term" value="C:small ribosomal subunit"/>
    <property type="evidence" value="ECO:0007669"/>
    <property type="project" value="InterPro"/>
</dbReference>
<dbReference type="GO" id="GO:0019843">
    <property type="term" value="F:rRNA binding"/>
    <property type="evidence" value="ECO:0007669"/>
    <property type="project" value="UniProtKB-UniRule"/>
</dbReference>
<dbReference type="GO" id="GO:0003735">
    <property type="term" value="F:structural constituent of ribosome"/>
    <property type="evidence" value="ECO:0007669"/>
    <property type="project" value="InterPro"/>
</dbReference>
<dbReference type="GO" id="GO:0000028">
    <property type="term" value="P:ribosomal small subunit assembly"/>
    <property type="evidence" value="ECO:0007669"/>
    <property type="project" value="TreeGrafter"/>
</dbReference>
<dbReference type="GO" id="GO:0006412">
    <property type="term" value="P:translation"/>
    <property type="evidence" value="ECO:0007669"/>
    <property type="project" value="UniProtKB-UniRule"/>
</dbReference>
<dbReference type="FunFam" id="3.30.860.10:FF:000001">
    <property type="entry name" value="30S ribosomal protein S19"/>
    <property type="match status" value="1"/>
</dbReference>
<dbReference type="Gene3D" id="3.30.860.10">
    <property type="entry name" value="30s Ribosomal Protein S19, Chain A"/>
    <property type="match status" value="1"/>
</dbReference>
<dbReference type="HAMAP" id="MF_00531">
    <property type="entry name" value="Ribosomal_uS19"/>
    <property type="match status" value="1"/>
</dbReference>
<dbReference type="InterPro" id="IPR002222">
    <property type="entry name" value="Ribosomal_uS19"/>
</dbReference>
<dbReference type="InterPro" id="IPR005732">
    <property type="entry name" value="Ribosomal_uS19_bac-type"/>
</dbReference>
<dbReference type="InterPro" id="IPR020934">
    <property type="entry name" value="Ribosomal_uS19_CS"/>
</dbReference>
<dbReference type="InterPro" id="IPR023575">
    <property type="entry name" value="Ribosomal_uS19_SF"/>
</dbReference>
<dbReference type="NCBIfam" id="TIGR01050">
    <property type="entry name" value="rpsS_bact"/>
    <property type="match status" value="1"/>
</dbReference>
<dbReference type="PANTHER" id="PTHR11880">
    <property type="entry name" value="RIBOSOMAL PROTEIN S19P FAMILY MEMBER"/>
    <property type="match status" value="1"/>
</dbReference>
<dbReference type="PANTHER" id="PTHR11880:SF8">
    <property type="entry name" value="SMALL RIBOSOMAL SUBUNIT PROTEIN US19M"/>
    <property type="match status" value="1"/>
</dbReference>
<dbReference type="Pfam" id="PF00203">
    <property type="entry name" value="Ribosomal_S19"/>
    <property type="match status" value="1"/>
</dbReference>
<dbReference type="PIRSF" id="PIRSF002144">
    <property type="entry name" value="Ribosomal_S19"/>
    <property type="match status" value="1"/>
</dbReference>
<dbReference type="PRINTS" id="PR00975">
    <property type="entry name" value="RIBOSOMALS19"/>
</dbReference>
<dbReference type="SUPFAM" id="SSF54570">
    <property type="entry name" value="Ribosomal protein S19"/>
    <property type="match status" value="1"/>
</dbReference>
<dbReference type="PROSITE" id="PS00323">
    <property type="entry name" value="RIBOSOMAL_S19"/>
    <property type="match status" value="1"/>
</dbReference>
<feature type="chain" id="PRO_1000081755" description="Small ribosomal subunit protein uS19">
    <location>
        <begin position="1"/>
        <end position="92"/>
    </location>
</feature>
<organism>
    <name type="scientific">Acaryochloris marina (strain MBIC 11017)</name>
    <dbReference type="NCBI Taxonomy" id="329726"/>
    <lineage>
        <taxon>Bacteria</taxon>
        <taxon>Bacillati</taxon>
        <taxon>Cyanobacteriota</taxon>
        <taxon>Cyanophyceae</taxon>
        <taxon>Acaryochloridales</taxon>
        <taxon>Acaryochloridaceae</taxon>
        <taxon>Acaryochloris</taxon>
    </lineage>
</organism>
<gene>
    <name evidence="1" type="primary">rpsS</name>
    <name evidence="1" type="synonym">rps19</name>
    <name type="ordered locus">AM1_4700</name>
</gene>